<comment type="function">
    <text evidence="1">Involved in protein export. Acts as a chaperone by maintaining the newly synthesized protein in an open conformation. Functions as a peptidyl-prolyl cis-trans isomerase.</text>
</comment>
<comment type="catalytic activity">
    <reaction evidence="1">
        <text>[protein]-peptidylproline (omega=180) = [protein]-peptidylproline (omega=0)</text>
        <dbReference type="Rhea" id="RHEA:16237"/>
        <dbReference type="Rhea" id="RHEA-COMP:10747"/>
        <dbReference type="Rhea" id="RHEA-COMP:10748"/>
        <dbReference type="ChEBI" id="CHEBI:83833"/>
        <dbReference type="ChEBI" id="CHEBI:83834"/>
        <dbReference type="EC" id="5.2.1.8"/>
    </reaction>
</comment>
<comment type="subcellular location">
    <subcellularLocation>
        <location>Cytoplasm</location>
    </subcellularLocation>
    <text evidence="1">About half TF is bound to the ribosome near the polypeptide exit tunnel while the other half is free in the cytoplasm.</text>
</comment>
<comment type="domain">
    <text evidence="1">Consists of 3 domains; the N-terminus binds the ribosome, the middle domain has PPIase activity, while the C-terminus has intrinsic chaperone activity on its own.</text>
</comment>
<comment type="similarity">
    <text evidence="1">Belongs to the FKBP-type PPIase family. Tig subfamily.</text>
</comment>
<sequence length="446" mass="49881">MQVSLESTSSIERRMTIGVPATQVNSEVEKRLQKTARTVRMNGFRPGKVPMSVVKKRYGEGVRQEVIGEMMRDAYVEALQKEDLNPAGYPKFEPKKIEDGEDLEFIATFEIYPEVSIGDLSSISVEKEDFEIVDADVDSMIEKLRQQSSEWKDSEDAAAEGDRLTIDFKGMIDGEAFEGGSAQNAQIVIGSQRMIPGFEDGLVGLKAGDEKTLDLTFPEDYHAENLKGKLAQFEVKVSKVERSELPEINDEFFAQYGVQEGGEEAFKVEIRKNMEREARFAIANKVKQQVVDQLLGLSEFEVPSALVDSEVNRMREDAVQRFGGGQMKASQLPAELFKDQAVKRVKTGLIFAQVVKDNNLEATEEQIEAKIRELASSYQEPEQVVSWYMSNPEQKAQMQSVVLEDVVVDFVADKAKIETKSVSYEDAVKPRTAPAEQAEDGEQSAE</sequence>
<feature type="chain" id="PRO_0000256564" description="Trigger factor">
    <location>
        <begin position="1"/>
        <end position="446"/>
    </location>
</feature>
<feature type="domain" description="PPIase FKBP-type" evidence="1">
    <location>
        <begin position="161"/>
        <end position="246"/>
    </location>
</feature>
<feature type="region of interest" description="Disordered" evidence="2">
    <location>
        <begin position="422"/>
        <end position="446"/>
    </location>
</feature>
<feature type="compositionally biased region" description="Acidic residues" evidence="2">
    <location>
        <begin position="437"/>
        <end position="446"/>
    </location>
</feature>
<reference key="1">
    <citation type="journal article" date="2005" name="Nucleic Acids Res.">
        <title>Genomic blueprint of Hahella chejuensis, a marine microbe producing an algicidal agent.</title>
        <authorList>
            <person name="Jeong H."/>
            <person name="Yim J.H."/>
            <person name="Lee C."/>
            <person name="Choi S.-H."/>
            <person name="Park Y.K."/>
            <person name="Yoon S.H."/>
            <person name="Hur C.-G."/>
            <person name="Kang H.-Y."/>
            <person name="Kim D."/>
            <person name="Lee H.H."/>
            <person name="Park K.H."/>
            <person name="Park S.-H."/>
            <person name="Park H.-S."/>
            <person name="Lee H.K."/>
            <person name="Oh T.K."/>
            <person name="Kim J.F."/>
        </authorList>
    </citation>
    <scope>NUCLEOTIDE SEQUENCE [LARGE SCALE GENOMIC DNA]</scope>
    <source>
        <strain>KCTC 2396</strain>
    </source>
</reference>
<protein>
    <recommendedName>
        <fullName evidence="1">Trigger factor</fullName>
        <shortName evidence="1">TF</shortName>
        <ecNumber evidence="1">5.2.1.8</ecNumber>
    </recommendedName>
    <alternativeName>
        <fullName evidence="1">PPIase</fullName>
    </alternativeName>
</protein>
<dbReference type="EC" id="5.2.1.8" evidence="1"/>
<dbReference type="EMBL" id="CP000155">
    <property type="protein sequence ID" value="ABC28987.1"/>
    <property type="molecule type" value="Genomic_DNA"/>
</dbReference>
<dbReference type="RefSeq" id="WP_011396057.1">
    <property type="nucleotide sequence ID" value="NC_007645.1"/>
</dbReference>
<dbReference type="SMR" id="Q2SK37"/>
<dbReference type="STRING" id="349521.HCH_02157"/>
<dbReference type="KEGG" id="hch:HCH_02157"/>
<dbReference type="eggNOG" id="COG0544">
    <property type="taxonomic scope" value="Bacteria"/>
</dbReference>
<dbReference type="HOGENOM" id="CLU_033058_2_0_6"/>
<dbReference type="OrthoDB" id="9767721at2"/>
<dbReference type="Proteomes" id="UP000000238">
    <property type="component" value="Chromosome"/>
</dbReference>
<dbReference type="GO" id="GO:0005737">
    <property type="term" value="C:cytoplasm"/>
    <property type="evidence" value="ECO:0007669"/>
    <property type="project" value="UniProtKB-SubCell"/>
</dbReference>
<dbReference type="GO" id="GO:0003755">
    <property type="term" value="F:peptidyl-prolyl cis-trans isomerase activity"/>
    <property type="evidence" value="ECO:0007669"/>
    <property type="project" value="UniProtKB-UniRule"/>
</dbReference>
<dbReference type="GO" id="GO:0044183">
    <property type="term" value="F:protein folding chaperone"/>
    <property type="evidence" value="ECO:0007669"/>
    <property type="project" value="TreeGrafter"/>
</dbReference>
<dbReference type="GO" id="GO:0043022">
    <property type="term" value="F:ribosome binding"/>
    <property type="evidence" value="ECO:0007669"/>
    <property type="project" value="TreeGrafter"/>
</dbReference>
<dbReference type="GO" id="GO:0051083">
    <property type="term" value="P:'de novo' cotranslational protein folding"/>
    <property type="evidence" value="ECO:0007669"/>
    <property type="project" value="TreeGrafter"/>
</dbReference>
<dbReference type="GO" id="GO:0051301">
    <property type="term" value="P:cell division"/>
    <property type="evidence" value="ECO:0007669"/>
    <property type="project" value="UniProtKB-KW"/>
</dbReference>
<dbReference type="GO" id="GO:0061077">
    <property type="term" value="P:chaperone-mediated protein folding"/>
    <property type="evidence" value="ECO:0007669"/>
    <property type="project" value="TreeGrafter"/>
</dbReference>
<dbReference type="GO" id="GO:0015031">
    <property type="term" value="P:protein transport"/>
    <property type="evidence" value="ECO:0007669"/>
    <property type="project" value="UniProtKB-UniRule"/>
</dbReference>
<dbReference type="GO" id="GO:0043335">
    <property type="term" value="P:protein unfolding"/>
    <property type="evidence" value="ECO:0007669"/>
    <property type="project" value="TreeGrafter"/>
</dbReference>
<dbReference type="FunFam" id="3.10.50.40:FF:000001">
    <property type="entry name" value="Trigger factor"/>
    <property type="match status" value="1"/>
</dbReference>
<dbReference type="Gene3D" id="3.10.50.40">
    <property type="match status" value="1"/>
</dbReference>
<dbReference type="Gene3D" id="3.30.70.1050">
    <property type="entry name" value="Trigger factor ribosome-binding domain"/>
    <property type="match status" value="1"/>
</dbReference>
<dbReference type="Gene3D" id="1.10.3120.10">
    <property type="entry name" value="Trigger factor, C-terminal domain"/>
    <property type="match status" value="1"/>
</dbReference>
<dbReference type="HAMAP" id="MF_00303">
    <property type="entry name" value="Trigger_factor_Tig"/>
    <property type="match status" value="1"/>
</dbReference>
<dbReference type="InterPro" id="IPR046357">
    <property type="entry name" value="PPIase_dom_sf"/>
</dbReference>
<dbReference type="InterPro" id="IPR001179">
    <property type="entry name" value="PPIase_FKBP_dom"/>
</dbReference>
<dbReference type="InterPro" id="IPR005215">
    <property type="entry name" value="Trig_fac"/>
</dbReference>
<dbReference type="InterPro" id="IPR008880">
    <property type="entry name" value="Trigger_fac_C"/>
</dbReference>
<dbReference type="InterPro" id="IPR037041">
    <property type="entry name" value="Trigger_fac_C_sf"/>
</dbReference>
<dbReference type="InterPro" id="IPR008881">
    <property type="entry name" value="Trigger_fac_ribosome-bd_bac"/>
</dbReference>
<dbReference type="InterPro" id="IPR036611">
    <property type="entry name" value="Trigger_fac_ribosome-bd_sf"/>
</dbReference>
<dbReference type="InterPro" id="IPR027304">
    <property type="entry name" value="Trigger_fact/SurA_dom_sf"/>
</dbReference>
<dbReference type="NCBIfam" id="TIGR00115">
    <property type="entry name" value="tig"/>
    <property type="match status" value="1"/>
</dbReference>
<dbReference type="PANTHER" id="PTHR30560">
    <property type="entry name" value="TRIGGER FACTOR CHAPERONE AND PEPTIDYL-PROLYL CIS/TRANS ISOMERASE"/>
    <property type="match status" value="1"/>
</dbReference>
<dbReference type="PANTHER" id="PTHR30560:SF3">
    <property type="entry name" value="TRIGGER FACTOR-LIKE PROTEIN TIG, CHLOROPLASTIC"/>
    <property type="match status" value="1"/>
</dbReference>
<dbReference type="Pfam" id="PF00254">
    <property type="entry name" value="FKBP_C"/>
    <property type="match status" value="1"/>
</dbReference>
<dbReference type="Pfam" id="PF05698">
    <property type="entry name" value="Trigger_C"/>
    <property type="match status" value="1"/>
</dbReference>
<dbReference type="Pfam" id="PF05697">
    <property type="entry name" value="Trigger_N"/>
    <property type="match status" value="1"/>
</dbReference>
<dbReference type="PIRSF" id="PIRSF003095">
    <property type="entry name" value="Trigger_factor"/>
    <property type="match status" value="1"/>
</dbReference>
<dbReference type="SUPFAM" id="SSF54534">
    <property type="entry name" value="FKBP-like"/>
    <property type="match status" value="1"/>
</dbReference>
<dbReference type="SUPFAM" id="SSF109998">
    <property type="entry name" value="Triger factor/SurA peptide-binding domain-like"/>
    <property type="match status" value="1"/>
</dbReference>
<dbReference type="SUPFAM" id="SSF102735">
    <property type="entry name" value="Trigger factor ribosome-binding domain"/>
    <property type="match status" value="1"/>
</dbReference>
<dbReference type="PROSITE" id="PS50059">
    <property type="entry name" value="FKBP_PPIASE"/>
    <property type="match status" value="1"/>
</dbReference>
<evidence type="ECO:0000255" key="1">
    <source>
        <dbReference type="HAMAP-Rule" id="MF_00303"/>
    </source>
</evidence>
<evidence type="ECO:0000256" key="2">
    <source>
        <dbReference type="SAM" id="MobiDB-lite"/>
    </source>
</evidence>
<name>TIG_HAHCH</name>
<gene>
    <name evidence="1" type="primary">tig</name>
    <name type="ordered locus">HCH_02157</name>
</gene>
<keyword id="KW-0131">Cell cycle</keyword>
<keyword id="KW-0132">Cell division</keyword>
<keyword id="KW-0143">Chaperone</keyword>
<keyword id="KW-0963">Cytoplasm</keyword>
<keyword id="KW-0413">Isomerase</keyword>
<keyword id="KW-1185">Reference proteome</keyword>
<keyword id="KW-0697">Rotamase</keyword>
<accession>Q2SK37</accession>
<proteinExistence type="inferred from homology"/>
<organism>
    <name type="scientific">Hahella chejuensis (strain KCTC 2396)</name>
    <dbReference type="NCBI Taxonomy" id="349521"/>
    <lineage>
        <taxon>Bacteria</taxon>
        <taxon>Pseudomonadati</taxon>
        <taxon>Pseudomonadota</taxon>
        <taxon>Gammaproteobacteria</taxon>
        <taxon>Oceanospirillales</taxon>
        <taxon>Hahellaceae</taxon>
        <taxon>Hahella</taxon>
    </lineage>
</organism>